<keyword id="KW-0963">Cytoplasm</keyword>
<keyword id="KW-0251">Elongation factor</keyword>
<keyword id="KW-0342">GTP-binding</keyword>
<keyword id="KW-0378">Hydrolase</keyword>
<keyword id="KW-0460">Magnesium</keyword>
<keyword id="KW-0479">Metal-binding</keyword>
<keyword id="KW-0547">Nucleotide-binding</keyword>
<keyword id="KW-0648">Protein biosynthesis</keyword>
<gene>
    <name evidence="2" type="primary">tuf2</name>
    <name type="synonym">tufB</name>
    <name type="ordered locus">xcc-b100_3473</name>
</gene>
<proteinExistence type="inferred from homology"/>
<accession>B0RU96</accession>
<sequence length="396" mass="43185">MARAKFLREKLHVNVGTIGHVDHGKTTLTAALTKIGAERFGGEFKAYDAIDAAPEEKARGITISTAHVEYESAVRHYAHVDCPGHADYVKNMITGAAQMDGAILVCSAADGPMPQTREHILLSRQVGVPHIVVFLNKADMVDDAELLELVEMEVRELLSKYDFPGDDTPIIHGSARLALEGDQSDIGVPAILKLVEALDTFIPDPTRDVDRPFLMPVEDVFSISGRGTVVTGRIERGIIKVGDEIEIVGIRDTQKTTVTGVEMFRKLLDQGQAGDNAGLLLRGTKRDDVERGQVLCKPGSIKPHTEFEAEVYVLSKDEGGRHTPFFKGYRPQFYFRTTDITGACQLPEGVEMVMPGDNVKMVVTLINPVAMDEGLRFAIREGGRTVGAGVVAKIIK</sequence>
<evidence type="ECO:0000250" key="1"/>
<evidence type="ECO:0000255" key="2">
    <source>
        <dbReference type="HAMAP-Rule" id="MF_00118"/>
    </source>
</evidence>
<feature type="chain" id="PRO_0000337578" description="Elongation factor Tu 2">
    <location>
        <begin position="1"/>
        <end position="396"/>
    </location>
</feature>
<feature type="domain" description="tr-type G">
    <location>
        <begin position="10"/>
        <end position="206"/>
    </location>
</feature>
<feature type="region of interest" description="G1" evidence="1">
    <location>
        <begin position="19"/>
        <end position="26"/>
    </location>
</feature>
<feature type="region of interest" description="G2" evidence="1">
    <location>
        <begin position="60"/>
        <end position="64"/>
    </location>
</feature>
<feature type="region of interest" description="G3" evidence="1">
    <location>
        <begin position="81"/>
        <end position="84"/>
    </location>
</feature>
<feature type="region of interest" description="G4" evidence="1">
    <location>
        <begin position="136"/>
        <end position="139"/>
    </location>
</feature>
<feature type="region of interest" description="G5" evidence="1">
    <location>
        <begin position="174"/>
        <end position="176"/>
    </location>
</feature>
<feature type="binding site" evidence="2">
    <location>
        <begin position="19"/>
        <end position="26"/>
    </location>
    <ligand>
        <name>GTP</name>
        <dbReference type="ChEBI" id="CHEBI:37565"/>
    </ligand>
</feature>
<feature type="binding site" evidence="2">
    <location>
        <position position="26"/>
    </location>
    <ligand>
        <name>Mg(2+)</name>
        <dbReference type="ChEBI" id="CHEBI:18420"/>
    </ligand>
</feature>
<feature type="binding site" evidence="2">
    <location>
        <begin position="81"/>
        <end position="85"/>
    </location>
    <ligand>
        <name>GTP</name>
        <dbReference type="ChEBI" id="CHEBI:37565"/>
    </ligand>
</feature>
<feature type="binding site" evidence="2">
    <location>
        <begin position="136"/>
        <end position="139"/>
    </location>
    <ligand>
        <name>GTP</name>
        <dbReference type="ChEBI" id="CHEBI:37565"/>
    </ligand>
</feature>
<protein>
    <recommendedName>
        <fullName evidence="2">Elongation factor Tu 2</fullName>
        <shortName evidence="2">EF-Tu 2</shortName>
        <ecNumber evidence="2">3.6.5.3</ecNumber>
    </recommendedName>
</protein>
<name>EFTU2_XANCB</name>
<organism>
    <name type="scientific">Xanthomonas campestris pv. campestris (strain B100)</name>
    <dbReference type="NCBI Taxonomy" id="509169"/>
    <lineage>
        <taxon>Bacteria</taxon>
        <taxon>Pseudomonadati</taxon>
        <taxon>Pseudomonadota</taxon>
        <taxon>Gammaproteobacteria</taxon>
        <taxon>Lysobacterales</taxon>
        <taxon>Lysobacteraceae</taxon>
        <taxon>Xanthomonas</taxon>
    </lineage>
</organism>
<comment type="function">
    <text evidence="2">GTP hydrolase that promotes the GTP-dependent binding of aminoacyl-tRNA to the A-site of ribosomes during protein biosynthesis.</text>
</comment>
<comment type="catalytic activity">
    <reaction evidence="2">
        <text>GTP + H2O = GDP + phosphate + H(+)</text>
        <dbReference type="Rhea" id="RHEA:19669"/>
        <dbReference type="ChEBI" id="CHEBI:15377"/>
        <dbReference type="ChEBI" id="CHEBI:15378"/>
        <dbReference type="ChEBI" id="CHEBI:37565"/>
        <dbReference type="ChEBI" id="CHEBI:43474"/>
        <dbReference type="ChEBI" id="CHEBI:58189"/>
        <dbReference type="EC" id="3.6.5.3"/>
    </reaction>
    <physiologicalReaction direction="left-to-right" evidence="2">
        <dbReference type="Rhea" id="RHEA:19670"/>
    </physiologicalReaction>
</comment>
<comment type="subunit">
    <text evidence="2">Monomer.</text>
</comment>
<comment type="subcellular location">
    <subcellularLocation>
        <location evidence="2">Cytoplasm</location>
    </subcellularLocation>
</comment>
<comment type="similarity">
    <text evidence="2">Belongs to the TRAFAC class translation factor GTPase superfamily. Classic translation factor GTPase family. EF-Tu/EF-1A subfamily.</text>
</comment>
<reference key="1">
    <citation type="journal article" date="2008" name="J. Biotechnol.">
        <title>The genome of Xanthomonas campestris pv. campestris B100 and its use for the reconstruction of metabolic pathways involved in xanthan biosynthesis.</title>
        <authorList>
            <person name="Vorhoelter F.-J."/>
            <person name="Schneiker S."/>
            <person name="Goesmann A."/>
            <person name="Krause L."/>
            <person name="Bekel T."/>
            <person name="Kaiser O."/>
            <person name="Linke B."/>
            <person name="Patschkowski T."/>
            <person name="Rueckert C."/>
            <person name="Schmid J."/>
            <person name="Sidhu V.K."/>
            <person name="Sieber V."/>
            <person name="Tauch A."/>
            <person name="Watt S.A."/>
            <person name="Weisshaar B."/>
            <person name="Becker A."/>
            <person name="Niehaus K."/>
            <person name="Puehler A."/>
        </authorList>
    </citation>
    <scope>NUCLEOTIDE SEQUENCE [LARGE SCALE GENOMIC DNA]</scope>
    <source>
        <strain>B100</strain>
    </source>
</reference>
<dbReference type="EC" id="3.6.5.3" evidence="2"/>
<dbReference type="EMBL" id="AM920689">
    <property type="protein sequence ID" value="CAP52838.1"/>
    <property type="molecule type" value="Genomic_DNA"/>
</dbReference>
<dbReference type="SMR" id="B0RU96"/>
<dbReference type="KEGG" id="xca:xcc-b100_3473"/>
<dbReference type="HOGENOM" id="CLU_007265_0_0_6"/>
<dbReference type="Proteomes" id="UP000001188">
    <property type="component" value="Chromosome"/>
</dbReference>
<dbReference type="GO" id="GO:0005829">
    <property type="term" value="C:cytosol"/>
    <property type="evidence" value="ECO:0007669"/>
    <property type="project" value="TreeGrafter"/>
</dbReference>
<dbReference type="GO" id="GO:0005525">
    <property type="term" value="F:GTP binding"/>
    <property type="evidence" value="ECO:0007669"/>
    <property type="project" value="UniProtKB-UniRule"/>
</dbReference>
<dbReference type="GO" id="GO:0003924">
    <property type="term" value="F:GTPase activity"/>
    <property type="evidence" value="ECO:0007669"/>
    <property type="project" value="InterPro"/>
</dbReference>
<dbReference type="GO" id="GO:0097216">
    <property type="term" value="F:guanosine tetraphosphate binding"/>
    <property type="evidence" value="ECO:0007669"/>
    <property type="project" value="UniProtKB-ARBA"/>
</dbReference>
<dbReference type="GO" id="GO:0003746">
    <property type="term" value="F:translation elongation factor activity"/>
    <property type="evidence" value="ECO:0007669"/>
    <property type="project" value="UniProtKB-UniRule"/>
</dbReference>
<dbReference type="CDD" id="cd01884">
    <property type="entry name" value="EF_Tu"/>
    <property type="match status" value="1"/>
</dbReference>
<dbReference type="CDD" id="cd03697">
    <property type="entry name" value="EFTU_II"/>
    <property type="match status" value="1"/>
</dbReference>
<dbReference type="CDD" id="cd03707">
    <property type="entry name" value="EFTU_III"/>
    <property type="match status" value="1"/>
</dbReference>
<dbReference type="FunFam" id="2.40.30.10:FF:000001">
    <property type="entry name" value="Elongation factor Tu"/>
    <property type="match status" value="1"/>
</dbReference>
<dbReference type="FunFam" id="3.40.50.300:FF:000003">
    <property type="entry name" value="Elongation factor Tu"/>
    <property type="match status" value="1"/>
</dbReference>
<dbReference type="Gene3D" id="3.40.50.300">
    <property type="entry name" value="P-loop containing nucleotide triphosphate hydrolases"/>
    <property type="match status" value="1"/>
</dbReference>
<dbReference type="Gene3D" id="2.40.30.10">
    <property type="entry name" value="Translation factors"/>
    <property type="match status" value="2"/>
</dbReference>
<dbReference type="HAMAP" id="MF_00118_B">
    <property type="entry name" value="EF_Tu_B"/>
    <property type="match status" value="1"/>
</dbReference>
<dbReference type="InterPro" id="IPR041709">
    <property type="entry name" value="EF-Tu_GTP-bd"/>
</dbReference>
<dbReference type="InterPro" id="IPR050055">
    <property type="entry name" value="EF-Tu_GTPase"/>
</dbReference>
<dbReference type="InterPro" id="IPR004161">
    <property type="entry name" value="EFTu-like_2"/>
</dbReference>
<dbReference type="InterPro" id="IPR033720">
    <property type="entry name" value="EFTU_2"/>
</dbReference>
<dbReference type="InterPro" id="IPR031157">
    <property type="entry name" value="G_TR_CS"/>
</dbReference>
<dbReference type="InterPro" id="IPR027417">
    <property type="entry name" value="P-loop_NTPase"/>
</dbReference>
<dbReference type="InterPro" id="IPR005225">
    <property type="entry name" value="Small_GTP-bd"/>
</dbReference>
<dbReference type="InterPro" id="IPR000795">
    <property type="entry name" value="T_Tr_GTP-bd_dom"/>
</dbReference>
<dbReference type="InterPro" id="IPR009000">
    <property type="entry name" value="Transl_B-barrel_sf"/>
</dbReference>
<dbReference type="InterPro" id="IPR009001">
    <property type="entry name" value="Transl_elong_EF1A/Init_IF2_C"/>
</dbReference>
<dbReference type="InterPro" id="IPR004541">
    <property type="entry name" value="Transl_elong_EFTu/EF1A_bac/org"/>
</dbReference>
<dbReference type="InterPro" id="IPR004160">
    <property type="entry name" value="Transl_elong_EFTu/EF1A_C"/>
</dbReference>
<dbReference type="NCBIfam" id="TIGR00485">
    <property type="entry name" value="EF-Tu"/>
    <property type="match status" value="1"/>
</dbReference>
<dbReference type="NCBIfam" id="NF000766">
    <property type="entry name" value="PRK00049.1"/>
    <property type="match status" value="1"/>
</dbReference>
<dbReference type="NCBIfam" id="NF009372">
    <property type="entry name" value="PRK12735.1"/>
    <property type="match status" value="1"/>
</dbReference>
<dbReference type="NCBIfam" id="NF009373">
    <property type="entry name" value="PRK12736.1"/>
    <property type="match status" value="1"/>
</dbReference>
<dbReference type="NCBIfam" id="TIGR00231">
    <property type="entry name" value="small_GTP"/>
    <property type="match status" value="1"/>
</dbReference>
<dbReference type="PANTHER" id="PTHR43721:SF22">
    <property type="entry name" value="ELONGATION FACTOR TU, MITOCHONDRIAL"/>
    <property type="match status" value="1"/>
</dbReference>
<dbReference type="PANTHER" id="PTHR43721">
    <property type="entry name" value="ELONGATION FACTOR TU-RELATED"/>
    <property type="match status" value="1"/>
</dbReference>
<dbReference type="Pfam" id="PF00009">
    <property type="entry name" value="GTP_EFTU"/>
    <property type="match status" value="1"/>
</dbReference>
<dbReference type="Pfam" id="PF03144">
    <property type="entry name" value="GTP_EFTU_D2"/>
    <property type="match status" value="1"/>
</dbReference>
<dbReference type="Pfam" id="PF03143">
    <property type="entry name" value="GTP_EFTU_D3"/>
    <property type="match status" value="1"/>
</dbReference>
<dbReference type="PRINTS" id="PR00315">
    <property type="entry name" value="ELONGATNFCT"/>
</dbReference>
<dbReference type="SUPFAM" id="SSF50465">
    <property type="entry name" value="EF-Tu/eEF-1alpha/eIF2-gamma C-terminal domain"/>
    <property type="match status" value="1"/>
</dbReference>
<dbReference type="SUPFAM" id="SSF52540">
    <property type="entry name" value="P-loop containing nucleoside triphosphate hydrolases"/>
    <property type="match status" value="1"/>
</dbReference>
<dbReference type="SUPFAM" id="SSF50447">
    <property type="entry name" value="Translation proteins"/>
    <property type="match status" value="1"/>
</dbReference>
<dbReference type="PROSITE" id="PS00301">
    <property type="entry name" value="G_TR_1"/>
    <property type="match status" value="1"/>
</dbReference>
<dbReference type="PROSITE" id="PS51722">
    <property type="entry name" value="G_TR_2"/>
    <property type="match status" value="1"/>
</dbReference>